<organism>
    <name type="scientific">Hydrogenobaculum sp. (strain Y04AAS1)</name>
    <dbReference type="NCBI Taxonomy" id="380749"/>
    <lineage>
        <taxon>Bacteria</taxon>
        <taxon>Pseudomonadati</taxon>
        <taxon>Aquificota</taxon>
        <taxon>Aquificia</taxon>
        <taxon>Aquificales</taxon>
        <taxon>Aquificaceae</taxon>
        <taxon>Hydrogenobaculum</taxon>
    </lineage>
</organism>
<name>FLUC_HYDS0</name>
<proteinExistence type="inferred from homology"/>
<sequence length="122" mass="13155">MNYLAVLVGGGVGALVRYLVSIFIQKFVPNFPLGTMVINTTGAFLIGFLSIYLTEVIDAPPNIRLLLITGFLGGYTTFSTFTLEGIGLINNGDYLKAFYYIVGTNVIGFLFVALGRFLGGLL</sequence>
<dbReference type="EMBL" id="CP001130">
    <property type="protein sequence ID" value="ACG57273.1"/>
    <property type="molecule type" value="Genomic_DNA"/>
</dbReference>
<dbReference type="RefSeq" id="WP_012513629.1">
    <property type="nucleotide sequence ID" value="NC_011126.1"/>
</dbReference>
<dbReference type="SMR" id="B4U812"/>
<dbReference type="STRING" id="380749.HY04AAS1_0586"/>
<dbReference type="KEGG" id="hya:HY04AAS1_0586"/>
<dbReference type="eggNOG" id="COG0239">
    <property type="taxonomic scope" value="Bacteria"/>
</dbReference>
<dbReference type="HOGENOM" id="CLU_114342_3_3_0"/>
<dbReference type="OrthoDB" id="9815830at2"/>
<dbReference type="GO" id="GO:0005886">
    <property type="term" value="C:plasma membrane"/>
    <property type="evidence" value="ECO:0007669"/>
    <property type="project" value="UniProtKB-SubCell"/>
</dbReference>
<dbReference type="GO" id="GO:0062054">
    <property type="term" value="F:fluoride channel activity"/>
    <property type="evidence" value="ECO:0007669"/>
    <property type="project" value="UniProtKB-UniRule"/>
</dbReference>
<dbReference type="GO" id="GO:0046872">
    <property type="term" value="F:metal ion binding"/>
    <property type="evidence" value="ECO:0007669"/>
    <property type="project" value="UniProtKB-KW"/>
</dbReference>
<dbReference type="GO" id="GO:0140114">
    <property type="term" value="P:cellular detoxification of fluoride"/>
    <property type="evidence" value="ECO:0007669"/>
    <property type="project" value="UniProtKB-UniRule"/>
</dbReference>
<dbReference type="HAMAP" id="MF_00454">
    <property type="entry name" value="FluC"/>
    <property type="match status" value="1"/>
</dbReference>
<dbReference type="InterPro" id="IPR003691">
    <property type="entry name" value="FluC"/>
</dbReference>
<dbReference type="NCBIfam" id="TIGR00494">
    <property type="entry name" value="crcB"/>
    <property type="match status" value="1"/>
</dbReference>
<dbReference type="PANTHER" id="PTHR28259">
    <property type="entry name" value="FLUORIDE EXPORT PROTEIN 1-RELATED"/>
    <property type="match status" value="1"/>
</dbReference>
<dbReference type="PANTHER" id="PTHR28259:SF18">
    <property type="entry name" value="FLUORIDE-SPECIFIC ION CHANNEL FLUC"/>
    <property type="match status" value="1"/>
</dbReference>
<dbReference type="Pfam" id="PF02537">
    <property type="entry name" value="CRCB"/>
    <property type="match status" value="1"/>
</dbReference>
<comment type="function">
    <text evidence="1">Fluoride-specific ion channel. Important for reducing fluoride concentration in the cell, thus reducing its toxicity.</text>
</comment>
<comment type="catalytic activity">
    <reaction evidence="1">
        <text>fluoride(in) = fluoride(out)</text>
        <dbReference type="Rhea" id="RHEA:76159"/>
        <dbReference type="ChEBI" id="CHEBI:17051"/>
    </reaction>
    <physiologicalReaction direction="left-to-right" evidence="1">
        <dbReference type="Rhea" id="RHEA:76160"/>
    </physiologicalReaction>
</comment>
<comment type="activity regulation">
    <text evidence="1">Na(+) is not transported, but it plays an essential structural role and its presence is essential for fluoride channel function.</text>
</comment>
<comment type="subcellular location">
    <subcellularLocation>
        <location evidence="1">Cell inner membrane</location>
        <topology evidence="1">Multi-pass membrane protein</topology>
    </subcellularLocation>
</comment>
<comment type="similarity">
    <text evidence="1">Belongs to the fluoride channel Fluc/FEX (TC 1.A.43) family.</text>
</comment>
<protein>
    <recommendedName>
        <fullName evidence="1">Fluoride-specific ion channel FluC</fullName>
    </recommendedName>
</protein>
<accession>B4U812</accession>
<reference key="1">
    <citation type="journal article" date="2009" name="J. Bacteriol.">
        <title>Complete and draft genome sequences of six members of the Aquificales.</title>
        <authorList>
            <person name="Reysenbach A.-L."/>
            <person name="Hamamura N."/>
            <person name="Podar M."/>
            <person name="Griffiths E."/>
            <person name="Ferreira S."/>
            <person name="Hochstein R."/>
            <person name="Heidelberg J."/>
            <person name="Johnson J."/>
            <person name="Mead D."/>
            <person name="Pohorille A."/>
            <person name="Sarmiento M."/>
            <person name="Schweighofer K."/>
            <person name="Seshadri R."/>
            <person name="Voytek M.A."/>
        </authorList>
    </citation>
    <scope>NUCLEOTIDE SEQUENCE [LARGE SCALE GENOMIC DNA]</scope>
    <source>
        <strain>Y04AAS1</strain>
    </source>
</reference>
<gene>
    <name evidence="1" type="primary">fluC</name>
    <name evidence="1" type="synonym">crcB</name>
    <name type="ordered locus">HY04AAS1_0586</name>
</gene>
<evidence type="ECO:0000255" key="1">
    <source>
        <dbReference type="HAMAP-Rule" id="MF_00454"/>
    </source>
</evidence>
<feature type="chain" id="PRO_1000125137" description="Fluoride-specific ion channel FluC">
    <location>
        <begin position="1"/>
        <end position="122"/>
    </location>
</feature>
<feature type="transmembrane region" description="Helical" evidence="1">
    <location>
        <begin position="4"/>
        <end position="24"/>
    </location>
</feature>
<feature type="transmembrane region" description="Helical" evidence="1">
    <location>
        <begin position="33"/>
        <end position="53"/>
    </location>
</feature>
<feature type="transmembrane region" description="Helical" evidence="1">
    <location>
        <begin position="66"/>
        <end position="86"/>
    </location>
</feature>
<feature type="transmembrane region" description="Helical" evidence="1">
    <location>
        <begin position="95"/>
        <end position="115"/>
    </location>
</feature>
<feature type="binding site" evidence="1">
    <location>
        <position position="73"/>
    </location>
    <ligand>
        <name>Na(+)</name>
        <dbReference type="ChEBI" id="CHEBI:29101"/>
        <note>structural</note>
    </ligand>
</feature>
<feature type="binding site" evidence="1">
    <location>
        <position position="76"/>
    </location>
    <ligand>
        <name>Na(+)</name>
        <dbReference type="ChEBI" id="CHEBI:29101"/>
        <note>structural</note>
    </ligand>
</feature>
<keyword id="KW-0997">Cell inner membrane</keyword>
<keyword id="KW-1003">Cell membrane</keyword>
<keyword id="KW-0407">Ion channel</keyword>
<keyword id="KW-0406">Ion transport</keyword>
<keyword id="KW-0472">Membrane</keyword>
<keyword id="KW-0479">Metal-binding</keyword>
<keyword id="KW-0915">Sodium</keyword>
<keyword id="KW-0812">Transmembrane</keyword>
<keyword id="KW-1133">Transmembrane helix</keyword>
<keyword id="KW-0813">Transport</keyword>